<protein>
    <recommendedName>
        <fullName evidence="1">Phosphoenolpyruvate carboxylase</fullName>
        <shortName evidence="1">PEPC</shortName>
        <shortName evidence="1">PEPCase</shortName>
        <ecNumber evidence="1">4.1.1.31</ecNumber>
    </recommendedName>
</protein>
<evidence type="ECO:0000255" key="1">
    <source>
        <dbReference type="HAMAP-Rule" id="MF_00595"/>
    </source>
</evidence>
<dbReference type="EC" id="4.1.1.31" evidence="1"/>
<dbReference type="EMBL" id="CP000946">
    <property type="protein sequence ID" value="ACA79659.1"/>
    <property type="molecule type" value="Genomic_DNA"/>
</dbReference>
<dbReference type="RefSeq" id="WP_001005579.1">
    <property type="nucleotide sequence ID" value="NZ_MTFT01000042.1"/>
</dbReference>
<dbReference type="SMR" id="B1IVC2"/>
<dbReference type="GeneID" id="93777937"/>
<dbReference type="KEGG" id="ecl:EcolC_4060"/>
<dbReference type="HOGENOM" id="CLU_006557_2_0_6"/>
<dbReference type="GO" id="GO:0005829">
    <property type="term" value="C:cytosol"/>
    <property type="evidence" value="ECO:0007669"/>
    <property type="project" value="TreeGrafter"/>
</dbReference>
<dbReference type="GO" id="GO:0000287">
    <property type="term" value="F:magnesium ion binding"/>
    <property type="evidence" value="ECO:0007669"/>
    <property type="project" value="UniProtKB-UniRule"/>
</dbReference>
<dbReference type="GO" id="GO:0008964">
    <property type="term" value="F:phosphoenolpyruvate carboxylase activity"/>
    <property type="evidence" value="ECO:0007669"/>
    <property type="project" value="UniProtKB-UniRule"/>
</dbReference>
<dbReference type="GO" id="GO:0015977">
    <property type="term" value="P:carbon fixation"/>
    <property type="evidence" value="ECO:0007669"/>
    <property type="project" value="UniProtKB-UniRule"/>
</dbReference>
<dbReference type="GO" id="GO:0006107">
    <property type="term" value="P:oxaloacetate metabolic process"/>
    <property type="evidence" value="ECO:0007669"/>
    <property type="project" value="UniProtKB-UniRule"/>
</dbReference>
<dbReference type="GO" id="GO:0006099">
    <property type="term" value="P:tricarboxylic acid cycle"/>
    <property type="evidence" value="ECO:0007669"/>
    <property type="project" value="InterPro"/>
</dbReference>
<dbReference type="FunFam" id="1.20.1440.90:FF:000002">
    <property type="entry name" value="Phosphoenolpyruvate carboxylase"/>
    <property type="match status" value="1"/>
</dbReference>
<dbReference type="Gene3D" id="1.20.1440.90">
    <property type="entry name" value="Phosphoenolpyruvate/pyruvate domain"/>
    <property type="match status" value="1"/>
</dbReference>
<dbReference type="HAMAP" id="MF_00595">
    <property type="entry name" value="PEPcase_type1"/>
    <property type="match status" value="1"/>
</dbReference>
<dbReference type="InterPro" id="IPR021135">
    <property type="entry name" value="PEP_COase"/>
</dbReference>
<dbReference type="InterPro" id="IPR022805">
    <property type="entry name" value="PEP_COase_bac/pln-type"/>
</dbReference>
<dbReference type="InterPro" id="IPR018129">
    <property type="entry name" value="PEP_COase_Lys_AS"/>
</dbReference>
<dbReference type="InterPro" id="IPR033129">
    <property type="entry name" value="PEPCASE_His_AS"/>
</dbReference>
<dbReference type="InterPro" id="IPR015813">
    <property type="entry name" value="Pyrv/PenolPyrv_kinase-like_dom"/>
</dbReference>
<dbReference type="NCBIfam" id="NF000584">
    <property type="entry name" value="PRK00009.1"/>
    <property type="match status" value="1"/>
</dbReference>
<dbReference type="PANTHER" id="PTHR30523">
    <property type="entry name" value="PHOSPHOENOLPYRUVATE CARBOXYLASE"/>
    <property type="match status" value="1"/>
</dbReference>
<dbReference type="PANTHER" id="PTHR30523:SF6">
    <property type="entry name" value="PHOSPHOENOLPYRUVATE CARBOXYLASE"/>
    <property type="match status" value="1"/>
</dbReference>
<dbReference type="Pfam" id="PF00311">
    <property type="entry name" value="PEPcase"/>
    <property type="match status" value="1"/>
</dbReference>
<dbReference type="PRINTS" id="PR00150">
    <property type="entry name" value="PEPCARBXLASE"/>
</dbReference>
<dbReference type="SUPFAM" id="SSF51621">
    <property type="entry name" value="Phosphoenolpyruvate/pyruvate domain"/>
    <property type="match status" value="1"/>
</dbReference>
<dbReference type="PROSITE" id="PS00781">
    <property type="entry name" value="PEPCASE_1"/>
    <property type="match status" value="1"/>
</dbReference>
<dbReference type="PROSITE" id="PS00393">
    <property type="entry name" value="PEPCASE_2"/>
    <property type="match status" value="1"/>
</dbReference>
<feature type="chain" id="PRO_1000082426" description="Phosphoenolpyruvate carboxylase">
    <location>
        <begin position="1"/>
        <end position="883"/>
    </location>
</feature>
<feature type="active site" evidence="1">
    <location>
        <position position="138"/>
    </location>
</feature>
<feature type="active site" evidence="1">
    <location>
        <position position="546"/>
    </location>
</feature>
<reference key="1">
    <citation type="submission" date="2008-02" db="EMBL/GenBank/DDBJ databases">
        <title>Complete sequence of Escherichia coli C str. ATCC 8739.</title>
        <authorList>
            <person name="Copeland A."/>
            <person name="Lucas S."/>
            <person name="Lapidus A."/>
            <person name="Glavina del Rio T."/>
            <person name="Dalin E."/>
            <person name="Tice H."/>
            <person name="Bruce D."/>
            <person name="Goodwin L."/>
            <person name="Pitluck S."/>
            <person name="Kiss H."/>
            <person name="Brettin T."/>
            <person name="Detter J.C."/>
            <person name="Han C."/>
            <person name="Kuske C.R."/>
            <person name="Schmutz J."/>
            <person name="Larimer F."/>
            <person name="Land M."/>
            <person name="Hauser L."/>
            <person name="Kyrpides N."/>
            <person name="Mikhailova N."/>
            <person name="Ingram L."/>
            <person name="Richardson P."/>
        </authorList>
    </citation>
    <scope>NUCLEOTIDE SEQUENCE [LARGE SCALE GENOMIC DNA]</scope>
    <source>
        <strain>ATCC 8739 / DSM 1576 / NBRC 3972 / NCIMB 8545 / WDCM 00012 / Crooks</strain>
    </source>
</reference>
<comment type="function">
    <text evidence="1">Forms oxaloacetate, a four-carbon dicarboxylic acid source for the tricarboxylic acid cycle.</text>
</comment>
<comment type="catalytic activity">
    <reaction evidence="1">
        <text>oxaloacetate + phosphate = phosphoenolpyruvate + hydrogencarbonate</text>
        <dbReference type="Rhea" id="RHEA:28370"/>
        <dbReference type="ChEBI" id="CHEBI:16452"/>
        <dbReference type="ChEBI" id="CHEBI:17544"/>
        <dbReference type="ChEBI" id="CHEBI:43474"/>
        <dbReference type="ChEBI" id="CHEBI:58702"/>
        <dbReference type="EC" id="4.1.1.31"/>
    </reaction>
</comment>
<comment type="cofactor">
    <cofactor evidence="1">
        <name>Mg(2+)</name>
        <dbReference type="ChEBI" id="CHEBI:18420"/>
    </cofactor>
</comment>
<comment type="similarity">
    <text evidence="1">Belongs to the PEPCase type 1 family.</text>
</comment>
<accession>B1IVC2</accession>
<sequence>MNEQYSALRSNVSMLGKVLGETIKDALGEHILERVETIRKLSKSSRAGNDANRQELLTTLQNLSNDELLPVARAFSQFLNLANTAEQYHSISPKGEAASNPEVIARTLRKLKNQPELSEDTIKKAVESLSLELVLTAHPTEITRRTLIHKMVEVNACLKQLDNKDIADYEHNQLMRRLRQLIAQSWHTDEIRKLRPSPVDEAKWGFAVVENSLWQGVPNYLRELNEQLEENLGYKLPVEFVPVRFTSWMGGDRDGNPNVTADITRHVLLLSRWKATDLFLKDIQVLVSELSMVEATPELLALVGEEGAAEPYRYLMKNLRSRLMATQAWLEARLKGEELPKPEGLLTQNEELWEPLYACYQSLQACGMGIIANGDLLDTLRRVKCFGVPLVRIDIRQESTRHTEALGELTRYLGIGDYESWSEADKQAFLIRELNSKRPLLPRNWQPSAETREVLDTCQVIAEAPQGSIAAYVISMAKTPSDVLAVHLLLKEAGIGFAMPVAPLFETLDDLNNANDVMTQLLNIDWYRGLIQGKQMVMIGYSDSAKDAGVMAASWAQYQAQDALIKTCEKAGIELTLFHGRGGSIGRGGAPAHAALLSQPPGSLKGGLRVTEQGEMIRFKYGLPEITVSSLSLYTGAILEANLLPPPEPKESWRRIMDELSVISCDLYRGYVRENKDFVPYFRSATPEQELGKLPLGSRPAKRRPTGGVESLRAIPWIFAWTQNRLMLPAWLGAGTALQKVVEDGKQSELEAMCRDWPFFSTRLGMLEMVFAKADLWLAEYYDQRLVDKALWPLGKELRNLQEEDIKVVLAIANDSHLMADLPWIAESIQLRNIYTDPLNVLQAELLHRSRQAEKEGQEPDPRVEQALMVTIAGIAAGMRNTG</sequence>
<proteinExistence type="inferred from homology"/>
<gene>
    <name evidence="1" type="primary">ppc</name>
    <name type="ordered locus">EcolC_4060</name>
</gene>
<organism>
    <name type="scientific">Escherichia coli (strain ATCC 8739 / DSM 1576 / NBRC 3972 / NCIMB 8545 / WDCM 00012 / Crooks)</name>
    <dbReference type="NCBI Taxonomy" id="481805"/>
    <lineage>
        <taxon>Bacteria</taxon>
        <taxon>Pseudomonadati</taxon>
        <taxon>Pseudomonadota</taxon>
        <taxon>Gammaproteobacteria</taxon>
        <taxon>Enterobacterales</taxon>
        <taxon>Enterobacteriaceae</taxon>
        <taxon>Escherichia</taxon>
    </lineage>
</organism>
<name>CAPP_ECOLC</name>
<keyword id="KW-0120">Carbon dioxide fixation</keyword>
<keyword id="KW-0456">Lyase</keyword>
<keyword id="KW-0460">Magnesium</keyword>